<feature type="chain" id="PRO_0000065624" description="Interferon-inducible double-stranded RNA-dependent protein kinase activator A homolog B">
    <location>
        <begin position="1"/>
        <end position="298"/>
    </location>
</feature>
<feature type="domain" description="DRBM 1" evidence="2">
    <location>
        <begin position="20"/>
        <end position="87"/>
    </location>
</feature>
<feature type="domain" description="DRBM 2" evidence="2">
    <location>
        <begin position="112"/>
        <end position="180"/>
    </location>
</feature>
<feature type="domain" description="DRBM 3" evidence="2">
    <location>
        <begin position="225"/>
        <end position="293"/>
    </location>
</feature>
<feature type="helix" evidence="5">
    <location>
        <begin position="113"/>
        <end position="124"/>
    </location>
</feature>
<feature type="strand" evidence="5">
    <location>
        <begin position="130"/>
        <end position="138"/>
    </location>
</feature>
<feature type="helix" evidence="5">
    <location>
        <begin position="140"/>
        <end position="142"/>
    </location>
</feature>
<feature type="strand" evidence="5">
    <location>
        <begin position="144"/>
        <end position="151"/>
    </location>
</feature>
<feature type="strand" evidence="5">
    <location>
        <begin position="154"/>
        <end position="162"/>
    </location>
</feature>
<feature type="helix" evidence="5">
    <location>
        <begin position="163"/>
        <end position="179"/>
    </location>
</feature>
<name>PRKAB_XENLA</name>
<proteinExistence type="evidence at protein level"/>
<keyword id="KW-0002">3D-structure</keyword>
<keyword id="KW-0963">Cytoplasm</keyword>
<keyword id="KW-0539">Nucleus</keyword>
<keyword id="KW-1185">Reference proteome</keyword>
<keyword id="KW-0677">Repeat</keyword>
<keyword id="KW-0694">RNA-binding</keyword>
<keyword id="KW-0943">RNA-mediated gene silencing</keyword>
<dbReference type="EMBL" id="M96370">
    <property type="protein sequence ID" value="AAA49947.1"/>
    <property type="molecule type" value="mRNA"/>
</dbReference>
<dbReference type="PIR" id="S27945">
    <property type="entry name" value="S27945"/>
</dbReference>
<dbReference type="PDB" id="1DI2">
    <property type="method" value="X-ray"/>
    <property type="resolution" value="1.90 A"/>
    <property type="chains" value="A/B=112-180"/>
</dbReference>
<dbReference type="PDBsum" id="1DI2"/>
<dbReference type="SMR" id="Q91836"/>
<dbReference type="AGR" id="Xenbase:XB-GENE-940708"/>
<dbReference type="Xenbase" id="XB-GENE-940708">
    <property type="gene designation" value="prkra.L"/>
</dbReference>
<dbReference type="EvolutionaryTrace" id="Q91836"/>
<dbReference type="Proteomes" id="UP000186698">
    <property type="component" value="Unplaced"/>
</dbReference>
<dbReference type="GO" id="GO:0005737">
    <property type="term" value="C:cytoplasm"/>
    <property type="evidence" value="ECO:0000250"/>
    <property type="project" value="UniProtKB"/>
</dbReference>
<dbReference type="GO" id="GO:0005730">
    <property type="term" value="C:nucleolus"/>
    <property type="evidence" value="ECO:0007669"/>
    <property type="project" value="UniProtKB-SubCell"/>
</dbReference>
<dbReference type="GO" id="GO:0005634">
    <property type="term" value="C:nucleus"/>
    <property type="evidence" value="ECO:0000318"/>
    <property type="project" value="GO_Central"/>
</dbReference>
<dbReference type="GO" id="GO:0048471">
    <property type="term" value="C:perinuclear region of cytoplasm"/>
    <property type="evidence" value="ECO:0007669"/>
    <property type="project" value="UniProtKB-SubCell"/>
</dbReference>
<dbReference type="GO" id="GO:0016442">
    <property type="term" value="C:RISC complex"/>
    <property type="evidence" value="ECO:0000318"/>
    <property type="project" value="GO_Central"/>
</dbReference>
<dbReference type="GO" id="GO:0070578">
    <property type="term" value="C:RISC-loading complex"/>
    <property type="evidence" value="ECO:0000318"/>
    <property type="project" value="GO_Central"/>
</dbReference>
<dbReference type="GO" id="GO:0003725">
    <property type="term" value="F:double-stranded RNA binding"/>
    <property type="evidence" value="ECO:0000318"/>
    <property type="project" value="GO_Central"/>
</dbReference>
<dbReference type="GO" id="GO:0035197">
    <property type="term" value="F:siRNA binding"/>
    <property type="evidence" value="ECO:0000318"/>
    <property type="project" value="GO_Central"/>
</dbReference>
<dbReference type="GO" id="GO:0070920">
    <property type="term" value="P:regulation of regulatory ncRNA processing"/>
    <property type="evidence" value="ECO:0000318"/>
    <property type="project" value="GO_Central"/>
</dbReference>
<dbReference type="GO" id="GO:0030422">
    <property type="term" value="P:siRNA processing"/>
    <property type="evidence" value="ECO:0000250"/>
    <property type="project" value="UniProtKB"/>
</dbReference>
<dbReference type="CDD" id="cd19889">
    <property type="entry name" value="DSRM_PRKRA_rpt1"/>
    <property type="match status" value="1"/>
</dbReference>
<dbReference type="CDD" id="cd19891">
    <property type="entry name" value="DSRM_PRKRA_rpt2"/>
    <property type="match status" value="1"/>
</dbReference>
<dbReference type="CDD" id="cd19892">
    <property type="entry name" value="DSRM_PRKRA_rpt3"/>
    <property type="match status" value="1"/>
</dbReference>
<dbReference type="FunFam" id="3.30.160.20:FF:000005">
    <property type="entry name" value="Putative double-stranded RNA-specific adenosine deaminase"/>
    <property type="match status" value="1"/>
</dbReference>
<dbReference type="FunFam" id="3.30.160.20:FF:000019">
    <property type="entry name" value="RISC-loading complex subunit TARBP2"/>
    <property type="match status" value="1"/>
</dbReference>
<dbReference type="FunFam" id="3.30.160.20:FF:000018">
    <property type="entry name" value="RISC-loading complex subunit TARBP2 isoform X3"/>
    <property type="match status" value="1"/>
</dbReference>
<dbReference type="Gene3D" id="3.30.160.20">
    <property type="match status" value="3"/>
</dbReference>
<dbReference type="InterPro" id="IPR014720">
    <property type="entry name" value="dsRBD_dom"/>
</dbReference>
<dbReference type="InterPro" id="IPR044465">
    <property type="entry name" value="PRKRA_DSRM_1"/>
</dbReference>
<dbReference type="InterPro" id="IPR044466">
    <property type="entry name" value="PRKRA_DSRM_2"/>
</dbReference>
<dbReference type="InterPro" id="IPR044467">
    <property type="entry name" value="PRKRA_DSRM_3"/>
</dbReference>
<dbReference type="InterPro" id="IPR051247">
    <property type="entry name" value="RLC_Component"/>
</dbReference>
<dbReference type="PANTHER" id="PTHR46205:SF2">
    <property type="entry name" value="INTERFERON-INDUCIBLE DOUBLE-STRANDED RNA-DEPENDENT PROTEIN KINASE ACTIVATOR A"/>
    <property type="match status" value="1"/>
</dbReference>
<dbReference type="PANTHER" id="PTHR46205">
    <property type="entry name" value="LOQUACIOUS, ISOFORM B"/>
    <property type="match status" value="1"/>
</dbReference>
<dbReference type="Pfam" id="PF00035">
    <property type="entry name" value="dsrm"/>
    <property type="match status" value="2"/>
</dbReference>
<dbReference type="SMART" id="SM00358">
    <property type="entry name" value="DSRM"/>
    <property type="match status" value="3"/>
</dbReference>
<dbReference type="SUPFAM" id="SSF54768">
    <property type="entry name" value="dsRNA-binding domain-like"/>
    <property type="match status" value="3"/>
</dbReference>
<dbReference type="PROSITE" id="PS50137">
    <property type="entry name" value="DS_RBD"/>
    <property type="match status" value="3"/>
</dbReference>
<organism>
    <name type="scientific">Xenopus laevis</name>
    <name type="common">African clawed frog</name>
    <dbReference type="NCBI Taxonomy" id="8355"/>
    <lineage>
        <taxon>Eukaryota</taxon>
        <taxon>Metazoa</taxon>
        <taxon>Chordata</taxon>
        <taxon>Craniata</taxon>
        <taxon>Vertebrata</taxon>
        <taxon>Euteleostomi</taxon>
        <taxon>Amphibia</taxon>
        <taxon>Batrachia</taxon>
        <taxon>Anura</taxon>
        <taxon>Pipoidea</taxon>
        <taxon>Pipidae</taxon>
        <taxon>Xenopodinae</taxon>
        <taxon>Xenopus</taxon>
        <taxon>Xenopus</taxon>
    </lineage>
</organism>
<reference key="1">
    <citation type="journal article" date="1997" name="J. Cell Biol.">
        <title>Xlrbpa, a double-stranded RNA-binding protein associated with ribosomes and heterogeneous nuclear RNPs.</title>
        <authorList>
            <person name="Eckmann C.R."/>
            <person name="Jantsch M.F."/>
        </authorList>
    </citation>
    <scope>NUCLEOTIDE SEQUENCE [MRNA]</scope>
    <scope>RNA-BINDING</scope>
    <scope>ASSOCIATION WITH RIBOSOMES</scope>
    <scope>SUBCELLULAR LOCATION</scope>
    <scope>TISSUE SPECIFICITY</scope>
</reference>
<reference key="2">
    <citation type="journal article" date="1998" name="EMBO J.">
        <title>Molecular basis of double-stranded RNA-protein interactions: structure of a dsRNA-binding domain complexed with dsRNA.</title>
        <authorList>
            <person name="Ryter J.M."/>
            <person name="Schultz S.C."/>
        </authorList>
    </citation>
    <scope>X-RAY CRYSTALLOGRAPHY (1.9 ANGSTROMS) OF 112-180</scope>
</reference>
<evidence type="ECO:0000250" key="1"/>
<evidence type="ECO:0000255" key="2">
    <source>
        <dbReference type="PROSITE-ProRule" id="PRU00266"/>
    </source>
</evidence>
<evidence type="ECO:0000269" key="3">
    <source>
    </source>
</evidence>
<evidence type="ECO:0000305" key="4"/>
<evidence type="ECO:0007829" key="5">
    <source>
        <dbReference type="PDB" id="1DI2"/>
    </source>
</evidence>
<gene>
    <name type="primary">prkra-b</name>
    <name type="synonym">rbpa</name>
</gene>
<protein>
    <recommendedName>
        <fullName>Interferon-inducible double-stranded RNA-dependent protein kinase activator A homolog B</fullName>
    </recommendedName>
    <alternativeName>
        <fullName>Double-stranded RNA-binding protein A</fullName>
    </alternativeName>
    <alternativeName>
        <fullName>XlRBPA</fullName>
    </alternativeName>
</protein>
<accession>Q91836</accession>
<comment type="function">
    <text evidence="1">Activates eif2ak2/pkr in the absence of double-stranded RNA (dsRNA), leading to phosphorylation of eif2s1/efi2-alpha and inhibition of translation and induction of apoptosis. Required for siRNA production by dicer1 and for subsequent siRNA-mediated post-transcriptional gene silencing. Does not seem to be required for processing of pre-miRNA to miRNA by dicer1 (By similarity).</text>
</comment>
<comment type="subunit">
    <text evidence="1">Homodimer. Interacts with dicer1 and eif2ak2/pkr. Also able to interact with dsRNA (By similarity). Associates with ribosomes.</text>
</comment>
<comment type="subcellular location">
    <subcellularLocation>
        <location evidence="1">Cytoplasm</location>
        <location evidence="1">Perinuclear region</location>
    </subcellularLocation>
    <subcellularLocation>
        <location evidence="3">Nucleus</location>
    </subcellularLocation>
    <subcellularLocation>
        <location evidence="3">Nucleus</location>
        <location evidence="3">Nucleolus</location>
    </subcellularLocation>
</comment>
<comment type="tissue specificity">
    <text evidence="3">Expressed in brain, heart, kidney, liver, nerve and spleen.</text>
</comment>
<comment type="similarity">
    <text evidence="4">Belongs to the PRKRA family.</text>
</comment>
<sequence length="298" mass="32852">MSSEKPTSLNAMRATNPCETPIQLLHEFGTKTGNHPVYTLEKAEGQAHNPSFTFRLVIGDITSLGEGPSKKTPKQKAAEFALNILRGDTSKCLPVTDTLRDPKKPPNQMQENPVGSLQELAVQKGWRLPEYTVAQESGPPHKREFTITCRVETFVETGSGTSKQVAKRVAAEKLLTKFKTISTDNIPLNKLIGNKMGCTWDSMRNSSGEKISMLKRSPLSIPNTDYVKMLKDVAEELDFNLTYLDIDELSVNGQYQCLAELSTNPITVCHGTGISCGNAHNDAAHNALQYLKIMCIKK</sequence>